<dbReference type="EMBL" id="U09309">
    <property type="protein sequence ID" value="AAA56679.1"/>
    <property type="status" value="ALT_FRAME"/>
    <property type="molecule type" value="Unassigned_DNA"/>
</dbReference>
<dbReference type="EMBL" id="AE006468">
    <property type="protein sequence ID" value="AAL22046.1"/>
    <property type="molecule type" value="Genomic_DNA"/>
</dbReference>
<dbReference type="RefSeq" id="NP_462087.1">
    <property type="nucleotide sequence ID" value="NC_003197.2"/>
</dbReference>
<dbReference type="RefSeq" id="WP_000010658.1">
    <property type="nucleotide sequence ID" value="NC_003197.2"/>
</dbReference>
<dbReference type="SMR" id="P0A1C5"/>
<dbReference type="STRING" id="99287.STM3172"/>
<dbReference type="PaxDb" id="99287-STM3172"/>
<dbReference type="GeneID" id="1254695"/>
<dbReference type="KEGG" id="stm:STM3172"/>
<dbReference type="PATRIC" id="fig|99287.12.peg.3363"/>
<dbReference type="HOGENOM" id="CLU_009100_2_4_6"/>
<dbReference type="OMA" id="GMWIIED"/>
<dbReference type="PhylomeDB" id="P0A1C5"/>
<dbReference type="BioCyc" id="SENT99287:STM3172-MONOMER"/>
<dbReference type="Proteomes" id="UP000001014">
    <property type="component" value="Chromosome"/>
</dbReference>
<dbReference type="GO" id="GO:0032153">
    <property type="term" value="C:cell division site"/>
    <property type="evidence" value="ECO:0007669"/>
    <property type="project" value="UniProtKB-UniRule"/>
</dbReference>
<dbReference type="GO" id="GO:0030288">
    <property type="term" value="C:outer membrane-bounded periplasmic space"/>
    <property type="evidence" value="ECO:0000318"/>
    <property type="project" value="GO_Central"/>
</dbReference>
<dbReference type="GO" id="GO:0005507">
    <property type="term" value="F:copper ion binding"/>
    <property type="evidence" value="ECO:0007669"/>
    <property type="project" value="InterPro"/>
</dbReference>
<dbReference type="GO" id="GO:0016491">
    <property type="term" value="F:oxidoreductase activity"/>
    <property type="evidence" value="ECO:0000318"/>
    <property type="project" value="GO_Central"/>
</dbReference>
<dbReference type="GO" id="GO:0043093">
    <property type="term" value="P:FtsZ-dependent cytokinesis"/>
    <property type="evidence" value="ECO:0007669"/>
    <property type="project" value="UniProtKB-UniRule"/>
</dbReference>
<dbReference type="CDD" id="cd04232">
    <property type="entry name" value="CuRO_1_CueO_FtsP"/>
    <property type="match status" value="1"/>
</dbReference>
<dbReference type="CDD" id="cd13867">
    <property type="entry name" value="CuRO_2_CueO_FtsP"/>
    <property type="match status" value="1"/>
</dbReference>
<dbReference type="CDD" id="cd13890">
    <property type="entry name" value="CuRO_3_CueO_FtsP"/>
    <property type="match status" value="1"/>
</dbReference>
<dbReference type="FunFam" id="2.60.40.420:FF:000004">
    <property type="entry name" value="Cell division protein FtsP"/>
    <property type="match status" value="1"/>
</dbReference>
<dbReference type="FunFam" id="2.60.40.420:FF:000006">
    <property type="entry name" value="Cell division protein FtsP"/>
    <property type="match status" value="1"/>
</dbReference>
<dbReference type="FunFam" id="2.60.40.420:FF:000007">
    <property type="entry name" value="Cell division protein FtsP"/>
    <property type="match status" value="1"/>
</dbReference>
<dbReference type="Gene3D" id="2.60.40.420">
    <property type="entry name" value="Cupredoxins - blue copper proteins"/>
    <property type="match status" value="3"/>
</dbReference>
<dbReference type="HAMAP" id="MF_00915">
    <property type="entry name" value="FtsP"/>
    <property type="match status" value="1"/>
</dbReference>
<dbReference type="InterPro" id="IPR011707">
    <property type="entry name" value="Cu-oxidase-like_N"/>
</dbReference>
<dbReference type="InterPro" id="IPR011706">
    <property type="entry name" value="Cu-oxidase_C"/>
</dbReference>
<dbReference type="InterPro" id="IPR045087">
    <property type="entry name" value="Cu-oxidase_fam"/>
</dbReference>
<dbReference type="InterPro" id="IPR008972">
    <property type="entry name" value="Cupredoxin"/>
</dbReference>
<dbReference type="InterPro" id="IPR026589">
    <property type="entry name" value="FtsP"/>
</dbReference>
<dbReference type="InterPro" id="IPR006311">
    <property type="entry name" value="TAT_signal"/>
</dbReference>
<dbReference type="InterPro" id="IPR019546">
    <property type="entry name" value="TAT_signal_bac_arc"/>
</dbReference>
<dbReference type="NCBIfam" id="NF008135">
    <property type="entry name" value="PRK10883.1"/>
    <property type="match status" value="1"/>
</dbReference>
<dbReference type="NCBIfam" id="TIGR01409">
    <property type="entry name" value="TAT_signal_seq"/>
    <property type="match status" value="1"/>
</dbReference>
<dbReference type="PANTHER" id="PTHR48267:SF1">
    <property type="entry name" value="BILIRUBIN OXIDASE"/>
    <property type="match status" value="1"/>
</dbReference>
<dbReference type="PANTHER" id="PTHR48267">
    <property type="entry name" value="CUPREDOXIN SUPERFAMILY PROTEIN"/>
    <property type="match status" value="1"/>
</dbReference>
<dbReference type="Pfam" id="PF07731">
    <property type="entry name" value="Cu-oxidase_2"/>
    <property type="match status" value="1"/>
</dbReference>
<dbReference type="Pfam" id="PF07732">
    <property type="entry name" value="Cu-oxidase_3"/>
    <property type="match status" value="1"/>
</dbReference>
<dbReference type="SUPFAM" id="SSF49503">
    <property type="entry name" value="Cupredoxins"/>
    <property type="match status" value="3"/>
</dbReference>
<dbReference type="PROSITE" id="PS51318">
    <property type="entry name" value="TAT"/>
    <property type="match status" value="1"/>
</dbReference>
<organism>
    <name type="scientific">Salmonella typhimurium (strain LT2 / SGSC1412 / ATCC 700720)</name>
    <dbReference type="NCBI Taxonomy" id="99287"/>
    <lineage>
        <taxon>Bacteria</taxon>
        <taxon>Pseudomonadati</taxon>
        <taxon>Pseudomonadota</taxon>
        <taxon>Gammaproteobacteria</taxon>
        <taxon>Enterobacterales</taxon>
        <taxon>Enterobacteriaceae</taxon>
        <taxon>Salmonella</taxon>
    </lineage>
</organism>
<comment type="function">
    <text evidence="1">Cell division protein that is required for growth during stress conditions. May be involved in protecting or stabilizing the divisomal assembly under conditions of stress.</text>
</comment>
<comment type="subcellular location">
    <subcellularLocation>
        <location evidence="1">Periplasm</location>
    </subcellularLocation>
    <text evidence="1">Localizes to the division septum.</text>
</comment>
<comment type="PTM">
    <text>Predicted to be exported by the Tat system. The position of the signal peptide cleavage has not been experimentally proven.</text>
</comment>
<comment type="similarity">
    <text evidence="1">Belongs to the FtsP family.</text>
</comment>
<comment type="sequence caution" evidence="2">
    <conflict type="frameshift">
        <sequence resource="EMBL-CDS" id="AAA56679"/>
    </conflict>
</comment>
<feature type="signal peptide" description="Tat-type signal" evidence="1">
    <location>
        <begin position="1"/>
        <end position="27"/>
    </location>
</feature>
<feature type="chain" id="PRO_0000002996" description="Cell division protein FtsP">
    <location>
        <begin position="28"/>
        <end position="470"/>
    </location>
</feature>
<feature type="domain" description="Plastocyanin-like" evidence="1">
    <location>
        <begin position="222"/>
        <end position="287"/>
    </location>
</feature>
<keyword id="KW-0131">Cell cycle</keyword>
<keyword id="KW-0132">Cell division</keyword>
<keyword id="KW-0574">Periplasm</keyword>
<keyword id="KW-1185">Reference proteome</keyword>
<keyword id="KW-0732">Signal</keyword>
<gene>
    <name evidence="1" type="primary">ftsP</name>
    <name type="synonym">sufI</name>
    <name type="ordered locus">STM3172</name>
</gene>
<sequence length="470" mass="51858">MSFSRRQFLQASGIALCAGAIPLRANAAGQQQPLPVPPLLESRRGQPLFMTLQRAHWSFTQGTRAPVWGVNGRYLGPTIRVWKGDDVKLIYSNRLAENVSMTVAGLLVPGPLMGGPARMMSPNADWAPVLPIRQSAATLWYHANTPNRTAQQVYNGLAGMWLVEDDISKTLPIPNHYGVDDFPVIIQDKRLDNFGTPEYSEPGSGGFVGDTLLVNGAQSPYVEVSRGWVRLRLLNASNSRRYQLQMSDGRALHVISGDQGFLPAPVSVKQLSLAPGERREILVDMTNGDEVSITCGEAASIVDRIRGFFEPSSILVSTLVLTLRPTGLLPLVTDNLPMRLLPTEIMSGAPVRSRDISLGDDPGINGQLWDVNRIDITAQQGTWERWTVRADMPQSFHIEGVSFLIRNVNGAMPFPEDRGWKDTVWVDGQVELLVYYGQPSWPHFPFYFNSQTLEMADRGSIGQMLVNPAS</sequence>
<evidence type="ECO:0000255" key="1">
    <source>
        <dbReference type="HAMAP-Rule" id="MF_00915"/>
    </source>
</evidence>
<evidence type="ECO:0000305" key="2"/>
<accession>P0A1C5</accession>
<accession>P40799</accession>
<proteinExistence type="inferred from homology"/>
<protein>
    <recommendedName>
        <fullName evidence="1">Cell division protein FtsP</fullName>
    </recommendedName>
</protein>
<reference key="1">
    <citation type="submission" date="1994-04" db="EMBL/GenBank/DDBJ databases">
        <authorList>
            <person name="Cong J."/>
            <person name="Schmid M.B."/>
        </authorList>
    </citation>
    <scope>NUCLEOTIDE SEQUENCE [GENOMIC DNA]</scope>
    <source>
        <strain>LT2</strain>
    </source>
</reference>
<reference key="2">
    <citation type="journal article" date="2001" name="Nature">
        <title>Complete genome sequence of Salmonella enterica serovar Typhimurium LT2.</title>
        <authorList>
            <person name="McClelland M."/>
            <person name="Sanderson K.E."/>
            <person name="Spieth J."/>
            <person name="Clifton S.W."/>
            <person name="Latreille P."/>
            <person name="Courtney L."/>
            <person name="Porwollik S."/>
            <person name="Ali J."/>
            <person name="Dante M."/>
            <person name="Du F."/>
            <person name="Hou S."/>
            <person name="Layman D."/>
            <person name="Leonard S."/>
            <person name="Nguyen C."/>
            <person name="Scott K."/>
            <person name="Holmes A."/>
            <person name="Grewal N."/>
            <person name="Mulvaney E."/>
            <person name="Ryan E."/>
            <person name="Sun H."/>
            <person name="Florea L."/>
            <person name="Miller W."/>
            <person name="Stoneking T."/>
            <person name="Nhan M."/>
            <person name="Waterston R."/>
            <person name="Wilson R.K."/>
        </authorList>
    </citation>
    <scope>NUCLEOTIDE SEQUENCE [LARGE SCALE GENOMIC DNA]</scope>
    <source>
        <strain>LT2 / SGSC1412 / ATCC 700720</strain>
    </source>
</reference>
<name>FTSP_SALTY</name>